<name>NAC6_ARATH</name>
<dbReference type="EMBL" id="AC002560">
    <property type="protein sequence ID" value="AAF86512.1"/>
    <property type="molecule type" value="Genomic_DNA"/>
</dbReference>
<dbReference type="EMBL" id="CP002684">
    <property type="protein sequence ID" value="AEE27578.1"/>
    <property type="molecule type" value="Genomic_DNA"/>
</dbReference>
<dbReference type="RefSeq" id="NP_171848.3">
    <property type="nucleotide sequence ID" value="NM_100231.3"/>
</dbReference>
<dbReference type="STRING" id="3702.Q9LR74"/>
<dbReference type="PaxDb" id="3702-AT1G03490.1"/>
<dbReference type="EnsemblPlants" id="AT1G03490.1">
    <property type="protein sequence ID" value="AT1G03490.1"/>
    <property type="gene ID" value="AT1G03490"/>
</dbReference>
<dbReference type="GeneID" id="839487"/>
<dbReference type="Gramene" id="AT1G03490.1">
    <property type="protein sequence ID" value="AT1G03490.1"/>
    <property type="gene ID" value="AT1G03490"/>
</dbReference>
<dbReference type="KEGG" id="ath:AT1G03490"/>
<dbReference type="Araport" id="AT1G03490"/>
<dbReference type="TAIR" id="AT1G03490">
    <property type="gene designation" value="NAC006"/>
</dbReference>
<dbReference type="eggNOG" id="ENOG502R1MC">
    <property type="taxonomic scope" value="Eukaryota"/>
</dbReference>
<dbReference type="HOGENOM" id="CLU_066527_0_0_1"/>
<dbReference type="InParanoid" id="Q9LR74"/>
<dbReference type="OMA" id="WVDEISD"/>
<dbReference type="PhylomeDB" id="Q9LR74"/>
<dbReference type="PRO" id="PR:Q9LR74"/>
<dbReference type="Proteomes" id="UP000006548">
    <property type="component" value="Chromosome 1"/>
</dbReference>
<dbReference type="ExpressionAtlas" id="Q9LR74">
    <property type="expression patterns" value="baseline and differential"/>
</dbReference>
<dbReference type="GO" id="GO:0005634">
    <property type="term" value="C:nucleus"/>
    <property type="evidence" value="ECO:0007669"/>
    <property type="project" value="UniProtKB-SubCell"/>
</dbReference>
<dbReference type="GO" id="GO:0003677">
    <property type="term" value="F:DNA binding"/>
    <property type="evidence" value="ECO:0007669"/>
    <property type="project" value="UniProtKB-KW"/>
</dbReference>
<dbReference type="GO" id="GO:0003700">
    <property type="term" value="F:DNA-binding transcription factor activity"/>
    <property type="evidence" value="ECO:0000250"/>
    <property type="project" value="TAIR"/>
</dbReference>
<dbReference type="Gene3D" id="2.170.150.80">
    <property type="entry name" value="NAC domain"/>
    <property type="match status" value="1"/>
</dbReference>
<dbReference type="InterPro" id="IPR003441">
    <property type="entry name" value="NAC-dom"/>
</dbReference>
<dbReference type="InterPro" id="IPR036093">
    <property type="entry name" value="NAC_dom_sf"/>
</dbReference>
<dbReference type="PANTHER" id="PTHR31989">
    <property type="entry name" value="NAC DOMAIN-CONTAINING PROTEIN 82-RELATED"/>
    <property type="match status" value="1"/>
</dbReference>
<dbReference type="Pfam" id="PF02365">
    <property type="entry name" value="NAM"/>
    <property type="match status" value="1"/>
</dbReference>
<dbReference type="SUPFAM" id="SSF101941">
    <property type="entry name" value="NAC domain"/>
    <property type="match status" value="1"/>
</dbReference>
<dbReference type="PROSITE" id="PS51005">
    <property type="entry name" value="NAC"/>
    <property type="match status" value="1"/>
</dbReference>
<protein>
    <recommendedName>
        <fullName>NAC domain-containing protein 6</fullName>
        <shortName>ANAC006</shortName>
    </recommendedName>
</protein>
<evidence type="ECO:0000255" key="1">
    <source>
        <dbReference type="PROSITE-ProRule" id="PRU00353"/>
    </source>
</evidence>
<evidence type="ECO:0000256" key="2">
    <source>
        <dbReference type="SAM" id="MobiDB-lite"/>
    </source>
</evidence>
<evidence type="ECO:0000305" key="3"/>
<accession>Q9LR74</accession>
<organism>
    <name type="scientific">Arabidopsis thaliana</name>
    <name type="common">Mouse-ear cress</name>
    <dbReference type="NCBI Taxonomy" id="3702"/>
    <lineage>
        <taxon>Eukaryota</taxon>
        <taxon>Viridiplantae</taxon>
        <taxon>Streptophyta</taxon>
        <taxon>Embryophyta</taxon>
        <taxon>Tracheophyta</taxon>
        <taxon>Spermatophyta</taxon>
        <taxon>Magnoliopsida</taxon>
        <taxon>eudicotyledons</taxon>
        <taxon>Gunneridae</taxon>
        <taxon>Pentapetalae</taxon>
        <taxon>rosids</taxon>
        <taxon>malvids</taxon>
        <taxon>Brassicales</taxon>
        <taxon>Brassicaceae</taxon>
        <taxon>Camelineae</taxon>
        <taxon>Arabidopsis</taxon>
    </lineage>
</organism>
<sequence length="281" mass="32203">MKILPVGSRFCPTDLGLVRLYLRNKVERNQSSFITTMDIHQDYPWLLPHVNNPLFNNNEWYYFVPLTERGGKILSVHRKVAARGGSEGGTWRSNDGKKEIKDGHMQKGDGLRASDDLQKVVLCRIRYKKEANVNEFGLVNHQAHQTQDALTGFADQLEMMLEGQEDREQKEEADLTGFADSLETMLEGQEDHEQPEDADLTGFADSLETMLEGHEDREQPEEAELTVTQQQQQQQQQQQRQEDCDVTQEQEKDDVMVLINNPNDALALGNYEIIDLTRVDK</sequence>
<gene>
    <name type="primary">NAC006</name>
    <name type="ordered locus">At1g03490</name>
    <name type="ORF">F21B7.11</name>
</gene>
<feature type="chain" id="PRO_0000376614" description="NAC domain-containing protein 6">
    <location>
        <begin position="1"/>
        <end position="281"/>
    </location>
</feature>
<feature type="domain" description="NAC" evidence="1">
    <location>
        <begin position="4"/>
        <end position="156"/>
    </location>
</feature>
<feature type="DNA-binding region" evidence="1">
    <location>
        <begin position="109"/>
        <end position="162"/>
    </location>
</feature>
<feature type="region of interest" description="Disordered" evidence="2">
    <location>
        <begin position="84"/>
        <end position="109"/>
    </location>
</feature>
<feature type="region of interest" description="Disordered" evidence="2">
    <location>
        <begin position="211"/>
        <end position="249"/>
    </location>
</feature>
<feature type="compositionally biased region" description="Basic and acidic residues" evidence="2">
    <location>
        <begin position="94"/>
        <end position="109"/>
    </location>
</feature>
<feature type="compositionally biased region" description="Low complexity" evidence="2">
    <location>
        <begin position="229"/>
        <end position="239"/>
    </location>
</feature>
<reference key="1">
    <citation type="journal article" date="2000" name="Nature">
        <title>Sequence and analysis of chromosome 1 of the plant Arabidopsis thaliana.</title>
        <authorList>
            <person name="Theologis A."/>
            <person name="Ecker J.R."/>
            <person name="Palm C.J."/>
            <person name="Federspiel N.A."/>
            <person name="Kaul S."/>
            <person name="White O."/>
            <person name="Alonso J."/>
            <person name="Altafi H."/>
            <person name="Araujo R."/>
            <person name="Bowman C.L."/>
            <person name="Brooks S.Y."/>
            <person name="Buehler E."/>
            <person name="Chan A."/>
            <person name="Chao Q."/>
            <person name="Chen H."/>
            <person name="Cheuk R.F."/>
            <person name="Chin C.W."/>
            <person name="Chung M.K."/>
            <person name="Conn L."/>
            <person name="Conway A.B."/>
            <person name="Conway A.R."/>
            <person name="Creasy T.H."/>
            <person name="Dewar K."/>
            <person name="Dunn P."/>
            <person name="Etgu P."/>
            <person name="Feldblyum T.V."/>
            <person name="Feng J.-D."/>
            <person name="Fong B."/>
            <person name="Fujii C.Y."/>
            <person name="Gill J.E."/>
            <person name="Goldsmith A.D."/>
            <person name="Haas B."/>
            <person name="Hansen N.F."/>
            <person name="Hughes B."/>
            <person name="Huizar L."/>
            <person name="Hunter J.L."/>
            <person name="Jenkins J."/>
            <person name="Johnson-Hopson C."/>
            <person name="Khan S."/>
            <person name="Khaykin E."/>
            <person name="Kim C.J."/>
            <person name="Koo H.L."/>
            <person name="Kremenetskaia I."/>
            <person name="Kurtz D.B."/>
            <person name="Kwan A."/>
            <person name="Lam B."/>
            <person name="Langin-Hooper S."/>
            <person name="Lee A."/>
            <person name="Lee J.M."/>
            <person name="Lenz C.A."/>
            <person name="Li J.H."/>
            <person name="Li Y.-P."/>
            <person name="Lin X."/>
            <person name="Liu S.X."/>
            <person name="Liu Z.A."/>
            <person name="Luros J.S."/>
            <person name="Maiti R."/>
            <person name="Marziali A."/>
            <person name="Militscher J."/>
            <person name="Miranda M."/>
            <person name="Nguyen M."/>
            <person name="Nierman W.C."/>
            <person name="Osborne B.I."/>
            <person name="Pai G."/>
            <person name="Peterson J."/>
            <person name="Pham P.K."/>
            <person name="Rizzo M."/>
            <person name="Rooney T."/>
            <person name="Rowley D."/>
            <person name="Sakano H."/>
            <person name="Salzberg S.L."/>
            <person name="Schwartz J.R."/>
            <person name="Shinn P."/>
            <person name="Southwick A.M."/>
            <person name="Sun H."/>
            <person name="Tallon L.J."/>
            <person name="Tambunga G."/>
            <person name="Toriumi M.J."/>
            <person name="Town C.D."/>
            <person name="Utterback T."/>
            <person name="Van Aken S."/>
            <person name="Vaysberg M."/>
            <person name="Vysotskaia V.S."/>
            <person name="Walker M."/>
            <person name="Wu D."/>
            <person name="Yu G."/>
            <person name="Fraser C.M."/>
            <person name="Venter J.C."/>
            <person name="Davis R.W."/>
        </authorList>
    </citation>
    <scope>NUCLEOTIDE SEQUENCE [LARGE SCALE GENOMIC DNA]</scope>
    <source>
        <strain>cv. Columbia</strain>
    </source>
</reference>
<reference key="2">
    <citation type="journal article" date="2017" name="Plant J.">
        <title>Araport11: a complete reannotation of the Arabidopsis thaliana reference genome.</title>
        <authorList>
            <person name="Cheng C.Y."/>
            <person name="Krishnakumar V."/>
            <person name="Chan A.P."/>
            <person name="Thibaud-Nissen F."/>
            <person name="Schobel S."/>
            <person name="Town C.D."/>
        </authorList>
    </citation>
    <scope>GENOME REANNOTATION</scope>
    <source>
        <strain>cv. Columbia</strain>
    </source>
</reference>
<reference key="3">
    <citation type="journal article" date="2003" name="DNA Res.">
        <title>Comprehensive analysis of NAC family genes in Oryza sativa and Arabidopsis thaliana.</title>
        <authorList>
            <person name="Ooka H."/>
            <person name="Satoh K."/>
            <person name="Doi K."/>
            <person name="Nagata T."/>
            <person name="Otomo Y."/>
            <person name="Murakami K."/>
            <person name="Matsubara K."/>
            <person name="Osato N."/>
            <person name="Kawai J."/>
            <person name="Carninci P."/>
            <person name="Hayashizaki Y."/>
            <person name="Suzuki K."/>
            <person name="Kojima K."/>
            <person name="Takahara Y."/>
            <person name="Yamamoto K."/>
            <person name="Kikuchi S."/>
        </authorList>
    </citation>
    <scope>GENE FAMILY</scope>
    <scope>NOMENCLATURE</scope>
</reference>
<reference key="4">
    <citation type="journal article" date="2007" name="Mol. Cell. Proteomics">
        <title>Multidimensional protein identification technology (MudPIT) analysis of ubiquitinated proteins in plants.</title>
        <authorList>
            <person name="Maor R."/>
            <person name="Jones A."/>
            <person name="Nuehse T.S."/>
            <person name="Studholme D.J."/>
            <person name="Peck S.C."/>
            <person name="Shirasu K."/>
        </authorList>
    </citation>
    <scope>IDENTIFICATION BY MASS SPECTROMETRY [LARGE SCALE ANALYSIS]</scope>
    <source>
        <strain>cv. Landsberg erecta</strain>
    </source>
</reference>
<keyword id="KW-0238">DNA-binding</keyword>
<keyword id="KW-0539">Nucleus</keyword>
<keyword id="KW-1185">Reference proteome</keyword>
<keyword id="KW-0804">Transcription</keyword>
<keyword id="KW-0805">Transcription regulation</keyword>
<proteinExistence type="evidence at protein level"/>
<comment type="subcellular location">
    <subcellularLocation>
        <location evidence="3">Nucleus</location>
    </subcellularLocation>
</comment>
<comment type="domain">
    <text>The NAC domain includes a DNA-binding domain and a dimerization domain.</text>
</comment>